<gene>
    <name type="primary">slp</name>
    <name type="synonym">pal</name>
    <name type="ordered locus">BSU14620</name>
</gene>
<evidence type="ECO:0000255" key="1">
    <source>
        <dbReference type="PROSITE-ProRule" id="PRU00303"/>
    </source>
</evidence>
<evidence type="ECO:0000305" key="2"/>
<organism>
    <name type="scientific">Bacillus subtilis (strain 168)</name>
    <dbReference type="NCBI Taxonomy" id="224308"/>
    <lineage>
        <taxon>Bacteria</taxon>
        <taxon>Bacillati</taxon>
        <taxon>Bacillota</taxon>
        <taxon>Bacilli</taxon>
        <taxon>Bacillales</taxon>
        <taxon>Bacillaceae</taxon>
        <taxon>Bacillus</taxon>
    </lineage>
</organism>
<feature type="signal peptide" evidence="1">
    <location>
        <begin position="1"/>
        <end position="18"/>
    </location>
</feature>
<feature type="chain" id="PRO_0000018188" description="Pal-related lipoprotein">
    <location>
        <begin position="19"/>
        <end position="124"/>
    </location>
</feature>
<feature type="lipid moiety-binding region" description="N-palmitoyl cysteine" evidence="2">
    <location>
        <position position="19"/>
    </location>
</feature>
<feature type="lipid moiety-binding region" description="S-diacylglycerol cysteine" evidence="2">
    <location>
        <position position="19"/>
    </location>
</feature>
<proteinExistence type="inferred from homology"/>
<dbReference type="EMBL" id="M57435">
    <property type="protein sequence ID" value="AAA62685.1"/>
    <property type="molecule type" value="Genomic_DNA"/>
</dbReference>
<dbReference type="EMBL" id="AF012285">
    <property type="protein sequence ID" value="AAC24936.1"/>
    <property type="molecule type" value="Genomic_DNA"/>
</dbReference>
<dbReference type="EMBL" id="AL009126">
    <property type="protein sequence ID" value="CAB13335.1"/>
    <property type="molecule type" value="Genomic_DNA"/>
</dbReference>
<dbReference type="PIR" id="B54546">
    <property type="entry name" value="B54546"/>
</dbReference>
<dbReference type="RefSeq" id="NP_389345.1">
    <property type="nucleotide sequence ID" value="NC_000964.3"/>
</dbReference>
<dbReference type="RefSeq" id="WP_003245672.1">
    <property type="nucleotide sequence ID" value="NZ_OZ025638.1"/>
</dbReference>
<dbReference type="SMR" id="P39910"/>
<dbReference type="FunCoup" id="P39910">
    <property type="interactions" value="147"/>
</dbReference>
<dbReference type="STRING" id="224308.BSU14620"/>
<dbReference type="PaxDb" id="224308-BSU14620"/>
<dbReference type="DNASU" id="935991"/>
<dbReference type="EnsemblBacteria" id="CAB13335">
    <property type="protein sequence ID" value="CAB13335"/>
    <property type="gene ID" value="BSU_14620"/>
</dbReference>
<dbReference type="GeneID" id="935991"/>
<dbReference type="KEGG" id="bsu:BSU14620"/>
<dbReference type="PATRIC" id="fig|224308.179.peg.1594"/>
<dbReference type="eggNOG" id="COG0526">
    <property type="taxonomic scope" value="Bacteria"/>
</dbReference>
<dbReference type="InParanoid" id="P39910"/>
<dbReference type="OrthoDB" id="2864505at2"/>
<dbReference type="BioCyc" id="BSUB:BSU14620-MONOMER"/>
<dbReference type="Proteomes" id="UP000001570">
    <property type="component" value="Chromosome"/>
</dbReference>
<dbReference type="GO" id="GO:0005886">
    <property type="term" value="C:plasma membrane"/>
    <property type="evidence" value="ECO:0007669"/>
    <property type="project" value="UniProtKB-SubCell"/>
</dbReference>
<dbReference type="PROSITE" id="PS51257">
    <property type="entry name" value="PROKAR_LIPOPROTEIN"/>
    <property type="match status" value="1"/>
</dbReference>
<keyword id="KW-1003">Cell membrane</keyword>
<keyword id="KW-0449">Lipoprotein</keyword>
<keyword id="KW-0472">Membrane</keyword>
<keyword id="KW-0564">Palmitate</keyword>
<keyword id="KW-1185">Reference proteome</keyword>
<keyword id="KW-0732">Signal</keyword>
<sequence>MRYRAVFPMLIIVFALSGCTLSTINPMKKSRIDNIHHTQILFFSDENQIDQEAPYYDALLDLEKDYPEQIDKMKVYDKKEGWEDEIETVPTLMVVDQRHVVVKIEGCVKKKEDIIKPLQHVLSK</sequence>
<name>SLP_BACSU</name>
<comment type="subcellular location">
    <subcellularLocation>
        <location evidence="2">Cell membrane</location>
        <topology evidence="2">Lipid-anchor</topology>
    </subcellularLocation>
</comment>
<protein>
    <recommendedName>
        <fullName>Pal-related lipoprotein</fullName>
    </recommendedName>
</protein>
<reference key="1">
    <citation type="journal article" date="1990" name="J. Bacteriol.">
        <title>Secretory S complex of Bacillus subtilis: sequence analysis and identity to pyruvate dehydrogenase.</title>
        <authorList>
            <person name="Hemilae H.O."/>
            <person name="Palva A."/>
            <person name="Paulin L."/>
            <person name="Arvidson S."/>
            <person name="Palva I."/>
        </authorList>
    </citation>
    <scope>NUCLEOTIDE SEQUENCE [GENOMIC DNA]</scope>
    <source>
        <strain>168</strain>
    </source>
</reference>
<reference key="2">
    <citation type="journal article" date="1991" name="FEMS Microbiol. Lett.">
        <title>Sequence of a PAL-related lipoprotein from Bacillus subtilis.</title>
        <authorList>
            <person name="Hemilae H.O."/>
        </authorList>
    </citation>
    <scope>NUCLEOTIDE SEQUENCE [GENOMIC DNA]</scope>
    <source>
        <strain>168</strain>
    </source>
</reference>
<reference key="3">
    <citation type="journal article" date="1996" name="Microbiology">
        <title>The ampS-nprE (124 degrees-127 degrees) region of the Bacillus subtilis 168 chromosome: sequencing of a 27 kb segment and identification of several genes in the area.</title>
        <authorList>
            <person name="Winters P."/>
            <person name="Caldwell R.M."/>
            <person name="Enfield L."/>
            <person name="Ferrari E."/>
        </authorList>
    </citation>
    <scope>NUCLEOTIDE SEQUENCE [GENOMIC DNA]</scope>
    <source>
        <strain>168</strain>
    </source>
</reference>
<reference key="4">
    <citation type="submission" date="1997-07" db="EMBL/GenBank/DDBJ databases">
        <title>Sequence analysis of the mobA-ampS region of the Bacillus subtilis chromosome.</title>
        <authorList>
            <person name="Caldwell R.M."/>
            <person name="Ferrari E."/>
        </authorList>
    </citation>
    <scope>NUCLEOTIDE SEQUENCE [GENOMIC DNA]</scope>
    <source>
        <strain>168</strain>
    </source>
</reference>
<reference key="5">
    <citation type="journal article" date="1997" name="Nature">
        <title>The complete genome sequence of the Gram-positive bacterium Bacillus subtilis.</title>
        <authorList>
            <person name="Kunst F."/>
            <person name="Ogasawara N."/>
            <person name="Moszer I."/>
            <person name="Albertini A.M."/>
            <person name="Alloni G."/>
            <person name="Azevedo V."/>
            <person name="Bertero M.G."/>
            <person name="Bessieres P."/>
            <person name="Bolotin A."/>
            <person name="Borchert S."/>
            <person name="Borriss R."/>
            <person name="Boursier L."/>
            <person name="Brans A."/>
            <person name="Braun M."/>
            <person name="Brignell S.C."/>
            <person name="Bron S."/>
            <person name="Brouillet S."/>
            <person name="Bruschi C.V."/>
            <person name="Caldwell B."/>
            <person name="Capuano V."/>
            <person name="Carter N.M."/>
            <person name="Choi S.-K."/>
            <person name="Codani J.-J."/>
            <person name="Connerton I.F."/>
            <person name="Cummings N.J."/>
            <person name="Daniel R.A."/>
            <person name="Denizot F."/>
            <person name="Devine K.M."/>
            <person name="Duesterhoeft A."/>
            <person name="Ehrlich S.D."/>
            <person name="Emmerson P.T."/>
            <person name="Entian K.-D."/>
            <person name="Errington J."/>
            <person name="Fabret C."/>
            <person name="Ferrari E."/>
            <person name="Foulger D."/>
            <person name="Fritz C."/>
            <person name="Fujita M."/>
            <person name="Fujita Y."/>
            <person name="Fuma S."/>
            <person name="Galizzi A."/>
            <person name="Galleron N."/>
            <person name="Ghim S.-Y."/>
            <person name="Glaser P."/>
            <person name="Goffeau A."/>
            <person name="Golightly E.J."/>
            <person name="Grandi G."/>
            <person name="Guiseppi G."/>
            <person name="Guy B.J."/>
            <person name="Haga K."/>
            <person name="Haiech J."/>
            <person name="Harwood C.R."/>
            <person name="Henaut A."/>
            <person name="Hilbert H."/>
            <person name="Holsappel S."/>
            <person name="Hosono S."/>
            <person name="Hullo M.-F."/>
            <person name="Itaya M."/>
            <person name="Jones L.-M."/>
            <person name="Joris B."/>
            <person name="Karamata D."/>
            <person name="Kasahara Y."/>
            <person name="Klaerr-Blanchard M."/>
            <person name="Klein C."/>
            <person name="Kobayashi Y."/>
            <person name="Koetter P."/>
            <person name="Koningstein G."/>
            <person name="Krogh S."/>
            <person name="Kumano M."/>
            <person name="Kurita K."/>
            <person name="Lapidus A."/>
            <person name="Lardinois S."/>
            <person name="Lauber J."/>
            <person name="Lazarevic V."/>
            <person name="Lee S.-M."/>
            <person name="Levine A."/>
            <person name="Liu H."/>
            <person name="Masuda S."/>
            <person name="Mauel C."/>
            <person name="Medigue C."/>
            <person name="Medina N."/>
            <person name="Mellado R.P."/>
            <person name="Mizuno M."/>
            <person name="Moestl D."/>
            <person name="Nakai S."/>
            <person name="Noback M."/>
            <person name="Noone D."/>
            <person name="O'Reilly M."/>
            <person name="Ogawa K."/>
            <person name="Ogiwara A."/>
            <person name="Oudega B."/>
            <person name="Park S.-H."/>
            <person name="Parro V."/>
            <person name="Pohl T.M."/>
            <person name="Portetelle D."/>
            <person name="Porwollik S."/>
            <person name="Prescott A.M."/>
            <person name="Presecan E."/>
            <person name="Pujic P."/>
            <person name="Purnelle B."/>
            <person name="Rapoport G."/>
            <person name="Rey M."/>
            <person name="Reynolds S."/>
            <person name="Rieger M."/>
            <person name="Rivolta C."/>
            <person name="Rocha E."/>
            <person name="Roche B."/>
            <person name="Rose M."/>
            <person name="Sadaie Y."/>
            <person name="Sato T."/>
            <person name="Scanlan E."/>
            <person name="Schleich S."/>
            <person name="Schroeter R."/>
            <person name="Scoffone F."/>
            <person name="Sekiguchi J."/>
            <person name="Sekowska A."/>
            <person name="Seror S.J."/>
            <person name="Serror P."/>
            <person name="Shin B.-S."/>
            <person name="Soldo B."/>
            <person name="Sorokin A."/>
            <person name="Tacconi E."/>
            <person name="Takagi T."/>
            <person name="Takahashi H."/>
            <person name="Takemaru K."/>
            <person name="Takeuchi M."/>
            <person name="Tamakoshi A."/>
            <person name="Tanaka T."/>
            <person name="Terpstra P."/>
            <person name="Tognoni A."/>
            <person name="Tosato V."/>
            <person name="Uchiyama S."/>
            <person name="Vandenbol M."/>
            <person name="Vannier F."/>
            <person name="Vassarotti A."/>
            <person name="Viari A."/>
            <person name="Wambutt R."/>
            <person name="Wedler E."/>
            <person name="Wedler H."/>
            <person name="Weitzenegger T."/>
            <person name="Winters P."/>
            <person name="Wipat A."/>
            <person name="Yamamoto H."/>
            <person name="Yamane K."/>
            <person name="Yasumoto K."/>
            <person name="Yata K."/>
            <person name="Yoshida K."/>
            <person name="Yoshikawa H.-F."/>
            <person name="Zumstein E."/>
            <person name="Yoshikawa H."/>
            <person name="Danchin A."/>
        </authorList>
    </citation>
    <scope>NUCLEOTIDE SEQUENCE [LARGE SCALE GENOMIC DNA]</scope>
    <source>
        <strain>168</strain>
    </source>
</reference>
<accession>P39910</accession>